<organism>
    <name type="scientific">Variovorax paradoxus (strain S110)</name>
    <dbReference type="NCBI Taxonomy" id="543728"/>
    <lineage>
        <taxon>Bacteria</taxon>
        <taxon>Pseudomonadati</taxon>
        <taxon>Pseudomonadota</taxon>
        <taxon>Betaproteobacteria</taxon>
        <taxon>Burkholderiales</taxon>
        <taxon>Comamonadaceae</taxon>
        <taxon>Variovorax</taxon>
    </lineage>
</organism>
<keyword id="KW-0028">Amino-acid biosynthesis</keyword>
<keyword id="KW-0170">Cobalt</keyword>
<keyword id="KW-0220">Diaminopimelate biosynthesis</keyword>
<keyword id="KW-0378">Hydrolase</keyword>
<keyword id="KW-0457">Lysine biosynthesis</keyword>
<keyword id="KW-0479">Metal-binding</keyword>
<keyword id="KW-0862">Zinc</keyword>
<evidence type="ECO:0000255" key="1">
    <source>
        <dbReference type="HAMAP-Rule" id="MF_01690"/>
    </source>
</evidence>
<accession>C5CLT2</accession>
<proteinExistence type="inferred from homology"/>
<comment type="function">
    <text evidence="1">Catalyzes the hydrolysis of N-succinyl-L,L-diaminopimelic acid (SDAP), forming succinate and LL-2,6-diaminopimelate (DAP), an intermediate involved in the bacterial biosynthesis of lysine and meso-diaminopimelic acid, an essential component of bacterial cell walls.</text>
</comment>
<comment type="catalytic activity">
    <reaction evidence="1">
        <text>N-succinyl-(2S,6S)-2,6-diaminopimelate + H2O = (2S,6S)-2,6-diaminopimelate + succinate</text>
        <dbReference type="Rhea" id="RHEA:22608"/>
        <dbReference type="ChEBI" id="CHEBI:15377"/>
        <dbReference type="ChEBI" id="CHEBI:30031"/>
        <dbReference type="ChEBI" id="CHEBI:57609"/>
        <dbReference type="ChEBI" id="CHEBI:58087"/>
        <dbReference type="EC" id="3.5.1.18"/>
    </reaction>
</comment>
<comment type="cofactor">
    <cofactor evidence="1">
        <name>Zn(2+)</name>
        <dbReference type="ChEBI" id="CHEBI:29105"/>
    </cofactor>
    <cofactor evidence="1">
        <name>Co(2+)</name>
        <dbReference type="ChEBI" id="CHEBI:48828"/>
    </cofactor>
    <text evidence="1">Binds 2 Zn(2+) or Co(2+) ions per subunit.</text>
</comment>
<comment type="pathway">
    <text evidence="1">Amino-acid biosynthesis; L-lysine biosynthesis via DAP pathway; LL-2,6-diaminopimelate from (S)-tetrahydrodipicolinate (succinylase route): step 3/3.</text>
</comment>
<comment type="subunit">
    <text evidence="1">Homodimer.</text>
</comment>
<comment type="similarity">
    <text evidence="1">Belongs to the peptidase M20A family. DapE subfamily.</text>
</comment>
<reference key="1">
    <citation type="journal article" date="2011" name="J. Bacteriol.">
        <title>Complete genome sequence of the metabolically versatile plant growth-promoting endophyte, Variovorax paradoxus S110.</title>
        <authorList>
            <person name="Han J.I."/>
            <person name="Choi H.K."/>
            <person name="Lee S.W."/>
            <person name="Orwin P.M."/>
            <person name="Kim J."/>
            <person name="Laroe S.L."/>
            <person name="Kim T.G."/>
            <person name="O'Neil J."/>
            <person name="Leadbetter J.R."/>
            <person name="Lee S.Y."/>
            <person name="Hur C.G."/>
            <person name="Spain J.C."/>
            <person name="Ovchinnikova G."/>
            <person name="Goodwin L."/>
            <person name="Han C."/>
        </authorList>
    </citation>
    <scope>NUCLEOTIDE SEQUENCE [LARGE SCALE GENOMIC DNA]</scope>
    <source>
        <strain>S110</strain>
    </source>
</reference>
<name>DAPE_VARPS</name>
<feature type="chain" id="PRO_1000215926" description="Succinyl-diaminopimelate desuccinylase">
    <location>
        <begin position="1"/>
        <end position="391"/>
    </location>
</feature>
<feature type="active site" evidence="1">
    <location>
        <position position="76"/>
    </location>
</feature>
<feature type="active site" description="Proton acceptor" evidence="1">
    <location>
        <position position="141"/>
    </location>
</feature>
<feature type="binding site" evidence="1">
    <location>
        <position position="74"/>
    </location>
    <ligand>
        <name>Zn(2+)</name>
        <dbReference type="ChEBI" id="CHEBI:29105"/>
        <label>1</label>
    </ligand>
</feature>
<feature type="binding site" evidence="1">
    <location>
        <position position="107"/>
    </location>
    <ligand>
        <name>Zn(2+)</name>
        <dbReference type="ChEBI" id="CHEBI:29105"/>
        <label>1</label>
    </ligand>
</feature>
<feature type="binding site" evidence="1">
    <location>
        <position position="107"/>
    </location>
    <ligand>
        <name>Zn(2+)</name>
        <dbReference type="ChEBI" id="CHEBI:29105"/>
        <label>2</label>
    </ligand>
</feature>
<feature type="binding site" evidence="1">
    <location>
        <position position="142"/>
    </location>
    <ligand>
        <name>Zn(2+)</name>
        <dbReference type="ChEBI" id="CHEBI:29105"/>
        <label>2</label>
    </ligand>
</feature>
<feature type="binding site" evidence="1">
    <location>
        <position position="170"/>
    </location>
    <ligand>
        <name>Zn(2+)</name>
        <dbReference type="ChEBI" id="CHEBI:29105"/>
        <label>1</label>
    </ligand>
</feature>
<feature type="binding site" evidence="1">
    <location>
        <position position="360"/>
    </location>
    <ligand>
        <name>Zn(2+)</name>
        <dbReference type="ChEBI" id="CHEBI:29105"/>
        <label>2</label>
    </ligand>
</feature>
<dbReference type="EC" id="3.5.1.18" evidence="1"/>
<dbReference type="EMBL" id="CP001635">
    <property type="protein sequence ID" value="ACS19339.1"/>
    <property type="molecule type" value="Genomic_DNA"/>
</dbReference>
<dbReference type="SMR" id="C5CLT2"/>
<dbReference type="STRING" id="543728.Vapar_2717"/>
<dbReference type="KEGG" id="vap:Vapar_2717"/>
<dbReference type="eggNOG" id="COG0624">
    <property type="taxonomic scope" value="Bacteria"/>
</dbReference>
<dbReference type="HOGENOM" id="CLU_021802_4_0_4"/>
<dbReference type="OrthoDB" id="9809784at2"/>
<dbReference type="UniPathway" id="UPA00034">
    <property type="reaction ID" value="UER00021"/>
</dbReference>
<dbReference type="GO" id="GO:0008777">
    <property type="term" value="F:acetylornithine deacetylase activity"/>
    <property type="evidence" value="ECO:0007669"/>
    <property type="project" value="TreeGrafter"/>
</dbReference>
<dbReference type="GO" id="GO:0050897">
    <property type="term" value="F:cobalt ion binding"/>
    <property type="evidence" value="ECO:0007669"/>
    <property type="project" value="UniProtKB-UniRule"/>
</dbReference>
<dbReference type="GO" id="GO:0009014">
    <property type="term" value="F:succinyl-diaminopimelate desuccinylase activity"/>
    <property type="evidence" value="ECO:0007669"/>
    <property type="project" value="UniProtKB-UniRule"/>
</dbReference>
<dbReference type="GO" id="GO:0008270">
    <property type="term" value="F:zinc ion binding"/>
    <property type="evidence" value="ECO:0007669"/>
    <property type="project" value="UniProtKB-UniRule"/>
</dbReference>
<dbReference type="GO" id="GO:0019877">
    <property type="term" value="P:diaminopimelate biosynthetic process"/>
    <property type="evidence" value="ECO:0007669"/>
    <property type="project" value="UniProtKB-UniRule"/>
</dbReference>
<dbReference type="GO" id="GO:0006526">
    <property type="term" value="P:L-arginine biosynthetic process"/>
    <property type="evidence" value="ECO:0007669"/>
    <property type="project" value="TreeGrafter"/>
</dbReference>
<dbReference type="GO" id="GO:0009089">
    <property type="term" value="P:lysine biosynthetic process via diaminopimelate"/>
    <property type="evidence" value="ECO:0007669"/>
    <property type="project" value="UniProtKB-UniRule"/>
</dbReference>
<dbReference type="CDD" id="cd03891">
    <property type="entry name" value="M20_DapE_proteobac"/>
    <property type="match status" value="1"/>
</dbReference>
<dbReference type="Gene3D" id="3.40.630.10">
    <property type="entry name" value="Zn peptidases"/>
    <property type="match status" value="2"/>
</dbReference>
<dbReference type="HAMAP" id="MF_01690">
    <property type="entry name" value="DapE"/>
    <property type="match status" value="1"/>
</dbReference>
<dbReference type="InterPro" id="IPR036264">
    <property type="entry name" value="Bact_exopeptidase_dim_dom"/>
</dbReference>
<dbReference type="InterPro" id="IPR005941">
    <property type="entry name" value="DapE_proteobac"/>
</dbReference>
<dbReference type="InterPro" id="IPR002933">
    <property type="entry name" value="Peptidase_M20"/>
</dbReference>
<dbReference type="InterPro" id="IPR011650">
    <property type="entry name" value="Peptidase_M20_dimer"/>
</dbReference>
<dbReference type="InterPro" id="IPR050072">
    <property type="entry name" value="Peptidase_M20A"/>
</dbReference>
<dbReference type="NCBIfam" id="TIGR01246">
    <property type="entry name" value="dapE_proteo"/>
    <property type="match status" value="1"/>
</dbReference>
<dbReference type="NCBIfam" id="NF009557">
    <property type="entry name" value="PRK13009.1"/>
    <property type="match status" value="1"/>
</dbReference>
<dbReference type="PANTHER" id="PTHR43808">
    <property type="entry name" value="ACETYLORNITHINE DEACETYLASE"/>
    <property type="match status" value="1"/>
</dbReference>
<dbReference type="PANTHER" id="PTHR43808:SF31">
    <property type="entry name" value="N-ACETYL-L-CITRULLINE DEACETYLASE"/>
    <property type="match status" value="1"/>
</dbReference>
<dbReference type="Pfam" id="PF07687">
    <property type="entry name" value="M20_dimer"/>
    <property type="match status" value="1"/>
</dbReference>
<dbReference type="Pfam" id="PF01546">
    <property type="entry name" value="Peptidase_M20"/>
    <property type="match status" value="1"/>
</dbReference>
<dbReference type="SUPFAM" id="SSF55031">
    <property type="entry name" value="Bacterial exopeptidase dimerisation domain"/>
    <property type="match status" value="1"/>
</dbReference>
<dbReference type="SUPFAM" id="SSF53187">
    <property type="entry name" value="Zn-dependent exopeptidases"/>
    <property type="match status" value="1"/>
</dbReference>
<sequence length="391" mass="41507">MSRTLQLAEQLISRPSVTPDDAGCQQILGERLARLGFTLETIESGPADFRVTNLWAVRRPAGTAPTKTLVFAGHTDVVPTGPVEQWTSHPFTPTHRGGKLYGRGACDMKTSVAAFVVSIEEFLAATPDPRLTLALLLTSDEEGPGVDGTVIVCNALAARGETIDYCIVGEPTAVERCGDMIKNGRRGTMSGKLTVHGVQGHIAYPHLAKNPVHAVAPALAELVAINAAGGWDAGNAYFQPTSWQISNFHAGTGASNVIPGSAVIDFNFRFSTESTPESLQKRVHAVLDAHGVDCTLAWTIGGLPFLTTPGELVSAVQAAIADETGIATELSTSGGTSDARFIAKICKQVVELGPVNASIHKIDEHIDVAEIETLKNIYKRTLERLEASLIQ</sequence>
<gene>
    <name evidence="1" type="primary">dapE</name>
    <name type="ordered locus">Vapar_2717</name>
</gene>
<protein>
    <recommendedName>
        <fullName evidence="1">Succinyl-diaminopimelate desuccinylase</fullName>
        <shortName evidence="1">SDAP desuccinylase</shortName>
        <ecNumber evidence="1">3.5.1.18</ecNumber>
    </recommendedName>
    <alternativeName>
        <fullName evidence="1">N-succinyl-LL-2,6-diaminoheptanedioate amidohydrolase</fullName>
    </alternativeName>
</protein>